<name>GSA_WIGBR</name>
<keyword id="KW-0963">Cytoplasm</keyword>
<keyword id="KW-0413">Isomerase</keyword>
<keyword id="KW-0627">Porphyrin biosynthesis</keyword>
<keyword id="KW-0663">Pyridoxal phosphate</keyword>
<keyword id="KW-1185">Reference proteome</keyword>
<proteinExistence type="inferred from homology"/>
<protein>
    <recommendedName>
        <fullName evidence="1">Glutamate-1-semialdehyde 2,1-aminomutase</fullName>
        <shortName evidence="1">GSA</shortName>
        <ecNumber evidence="1">5.4.3.8</ecNumber>
    </recommendedName>
    <alternativeName>
        <fullName evidence="1">Glutamate-1-semialdehyde aminotransferase</fullName>
        <shortName evidence="1">GSA-AT</shortName>
    </alternativeName>
</protein>
<evidence type="ECO:0000255" key="1">
    <source>
        <dbReference type="HAMAP-Rule" id="MF_00375"/>
    </source>
</evidence>
<sequence>MIKNSITNKLYVEAKKIIPGGVNSPARSFYFVKEIPVIAKRSKGPYIFDVDNNKYIDYICSWGASILGHNNYYITSKIIEYSKKGLNFGLLTEIEIKIARLISKYIPSIEMIRMVNSGTEATMSAIRLARSYTKKNKIIKFDGCYHGHADFLLANSNLDPYDLFSSNPISSGIPKNILKDTLICPYNDYESIEKIFDLYPNKIACIIVEPIAGNMGCVLPEKNFLYKLRMLCNKFNSLLIMDEIITGFRISLGGAQSYYNIYPDITCLGKIIGGGLPIGAFGGKKRIMNHVSPSGSVYQAGTFSGNPISMISGYACLKLLKSPDLYNKLNKKTEYLVNELRSSACDNKIPVVINSLGSMFSIFFTNLDKIKCYKDVSSCNYKKFILFFNEIKKLGILFSPSLFESNFITLMHKKKDLEKTIDSANKVFKILKNKV</sequence>
<reference key="1">
    <citation type="journal article" date="2002" name="Nat. Genet.">
        <title>Genome sequence of the endocellular obligate symbiont of tsetse flies, Wigglesworthia glossinidia.</title>
        <authorList>
            <person name="Akman L."/>
            <person name="Yamashita A."/>
            <person name="Watanabe H."/>
            <person name="Oshima K."/>
            <person name="Shiba T."/>
            <person name="Hattori M."/>
            <person name="Aksoy S."/>
        </authorList>
    </citation>
    <scope>NUCLEOTIDE SEQUENCE [LARGE SCALE GENOMIC DNA]</scope>
</reference>
<accession>Q8D3C8</accession>
<feature type="chain" id="PRO_0000243642" description="Glutamate-1-semialdehyde 2,1-aminomutase">
    <location>
        <begin position="1"/>
        <end position="435"/>
    </location>
</feature>
<feature type="modified residue" description="N6-(pyridoxal phosphate)lysine" evidence="1">
    <location>
        <position position="270"/>
    </location>
</feature>
<organism>
    <name type="scientific">Wigglesworthia glossinidia brevipalpis</name>
    <dbReference type="NCBI Taxonomy" id="36870"/>
    <lineage>
        <taxon>Bacteria</taxon>
        <taxon>Pseudomonadati</taxon>
        <taxon>Pseudomonadota</taxon>
        <taxon>Gammaproteobacteria</taxon>
        <taxon>Enterobacterales</taxon>
        <taxon>Erwiniaceae</taxon>
        <taxon>Wigglesworthia</taxon>
    </lineage>
</organism>
<dbReference type="EC" id="5.4.3.8" evidence="1"/>
<dbReference type="EMBL" id="BA000021">
    <property type="protein sequence ID" value="BAC24219.1"/>
    <property type="molecule type" value="Genomic_DNA"/>
</dbReference>
<dbReference type="SMR" id="Q8D3C8"/>
<dbReference type="STRING" id="36870.gene:10368551"/>
<dbReference type="KEGG" id="wbr:hemL"/>
<dbReference type="eggNOG" id="COG0001">
    <property type="taxonomic scope" value="Bacteria"/>
</dbReference>
<dbReference type="HOGENOM" id="CLU_016922_1_5_6"/>
<dbReference type="OrthoDB" id="9801052at2"/>
<dbReference type="UniPathway" id="UPA00251">
    <property type="reaction ID" value="UER00317"/>
</dbReference>
<dbReference type="Proteomes" id="UP000000562">
    <property type="component" value="Chromosome"/>
</dbReference>
<dbReference type="GO" id="GO:0005737">
    <property type="term" value="C:cytoplasm"/>
    <property type="evidence" value="ECO:0007669"/>
    <property type="project" value="UniProtKB-SubCell"/>
</dbReference>
<dbReference type="GO" id="GO:0042286">
    <property type="term" value="F:glutamate-1-semialdehyde 2,1-aminomutase activity"/>
    <property type="evidence" value="ECO:0007669"/>
    <property type="project" value="UniProtKB-UniRule"/>
</dbReference>
<dbReference type="GO" id="GO:0030170">
    <property type="term" value="F:pyridoxal phosphate binding"/>
    <property type="evidence" value="ECO:0007669"/>
    <property type="project" value="InterPro"/>
</dbReference>
<dbReference type="GO" id="GO:0008483">
    <property type="term" value="F:transaminase activity"/>
    <property type="evidence" value="ECO:0007669"/>
    <property type="project" value="InterPro"/>
</dbReference>
<dbReference type="GO" id="GO:0006782">
    <property type="term" value="P:protoporphyrinogen IX biosynthetic process"/>
    <property type="evidence" value="ECO:0007669"/>
    <property type="project" value="UniProtKB-UniRule"/>
</dbReference>
<dbReference type="CDD" id="cd00610">
    <property type="entry name" value="OAT_like"/>
    <property type="match status" value="1"/>
</dbReference>
<dbReference type="FunFam" id="3.40.640.10:FF:000021">
    <property type="entry name" value="Glutamate-1-semialdehyde 2,1-aminomutase"/>
    <property type="match status" value="1"/>
</dbReference>
<dbReference type="Gene3D" id="3.90.1150.10">
    <property type="entry name" value="Aspartate Aminotransferase, domain 1"/>
    <property type="match status" value="1"/>
</dbReference>
<dbReference type="Gene3D" id="3.40.640.10">
    <property type="entry name" value="Type I PLP-dependent aspartate aminotransferase-like (Major domain)"/>
    <property type="match status" value="1"/>
</dbReference>
<dbReference type="HAMAP" id="MF_00375">
    <property type="entry name" value="HemL_aminotrans_3"/>
    <property type="match status" value="1"/>
</dbReference>
<dbReference type="InterPro" id="IPR004639">
    <property type="entry name" value="4pyrrol_synth_GluAld_NH2Trfase"/>
</dbReference>
<dbReference type="InterPro" id="IPR005814">
    <property type="entry name" value="Aminotrans_3"/>
</dbReference>
<dbReference type="InterPro" id="IPR049704">
    <property type="entry name" value="Aminotrans_3_PPA_site"/>
</dbReference>
<dbReference type="InterPro" id="IPR015424">
    <property type="entry name" value="PyrdxlP-dep_Trfase"/>
</dbReference>
<dbReference type="InterPro" id="IPR015421">
    <property type="entry name" value="PyrdxlP-dep_Trfase_major"/>
</dbReference>
<dbReference type="InterPro" id="IPR015422">
    <property type="entry name" value="PyrdxlP-dep_Trfase_small"/>
</dbReference>
<dbReference type="NCBIfam" id="TIGR00713">
    <property type="entry name" value="hemL"/>
    <property type="match status" value="1"/>
</dbReference>
<dbReference type="NCBIfam" id="NF000818">
    <property type="entry name" value="PRK00062.1"/>
    <property type="match status" value="1"/>
</dbReference>
<dbReference type="PANTHER" id="PTHR43713">
    <property type="entry name" value="GLUTAMATE-1-SEMIALDEHYDE 2,1-AMINOMUTASE"/>
    <property type="match status" value="1"/>
</dbReference>
<dbReference type="PANTHER" id="PTHR43713:SF3">
    <property type="entry name" value="GLUTAMATE-1-SEMIALDEHYDE 2,1-AMINOMUTASE 1, CHLOROPLASTIC-RELATED"/>
    <property type="match status" value="1"/>
</dbReference>
<dbReference type="Pfam" id="PF00202">
    <property type="entry name" value="Aminotran_3"/>
    <property type="match status" value="1"/>
</dbReference>
<dbReference type="SUPFAM" id="SSF53383">
    <property type="entry name" value="PLP-dependent transferases"/>
    <property type="match status" value="1"/>
</dbReference>
<dbReference type="PROSITE" id="PS00600">
    <property type="entry name" value="AA_TRANSFER_CLASS_3"/>
    <property type="match status" value="1"/>
</dbReference>
<gene>
    <name evidence="1" type="primary">hemL</name>
    <name type="ordered locus">WIGBR0730</name>
</gene>
<comment type="catalytic activity">
    <reaction evidence="1">
        <text>(S)-4-amino-5-oxopentanoate = 5-aminolevulinate</text>
        <dbReference type="Rhea" id="RHEA:14265"/>
        <dbReference type="ChEBI" id="CHEBI:57501"/>
        <dbReference type="ChEBI" id="CHEBI:356416"/>
        <dbReference type="EC" id="5.4.3.8"/>
    </reaction>
</comment>
<comment type="cofactor">
    <cofactor evidence="1">
        <name>pyridoxal 5'-phosphate</name>
        <dbReference type="ChEBI" id="CHEBI:597326"/>
    </cofactor>
</comment>
<comment type="pathway">
    <text evidence="1">Porphyrin-containing compound metabolism; protoporphyrin-IX biosynthesis; 5-aminolevulinate from L-glutamyl-tRNA(Glu): step 2/2.</text>
</comment>
<comment type="subunit">
    <text evidence="1">Homodimer.</text>
</comment>
<comment type="subcellular location">
    <subcellularLocation>
        <location evidence="1">Cytoplasm</location>
    </subcellularLocation>
</comment>
<comment type="similarity">
    <text evidence="1">Belongs to the class-III pyridoxal-phosphate-dependent aminotransferase family. HemL subfamily.</text>
</comment>